<protein>
    <recommendedName>
        <fullName>Uncharacterized transporter YIL166C</fullName>
    </recommendedName>
</protein>
<proteinExistence type="evidence at protein level"/>
<gene>
    <name type="ordered locus">YIL166C</name>
</gene>
<comment type="subcellular location">
    <subcellularLocation>
        <location>Membrane</location>
        <topology>Multi-pass membrane protein</topology>
    </subcellularLocation>
</comment>
<comment type="similarity">
    <text evidence="2">Belongs to the major facilitator superfamily. Allantoate permease family.</text>
</comment>
<keyword id="KW-0472">Membrane</keyword>
<keyword id="KW-1185">Reference proteome</keyword>
<keyword id="KW-0812">Transmembrane</keyword>
<keyword id="KW-1133">Transmembrane helix</keyword>
<keyword id="KW-0813">Transport</keyword>
<feature type="chain" id="PRO_0000121373" description="Uncharacterized transporter YIL166C">
    <location>
        <begin position="1"/>
        <end position="542"/>
    </location>
</feature>
<feature type="topological domain" description="Extracellular" evidence="1">
    <location>
        <begin position="1"/>
        <end position="78"/>
    </location>
</feature>
<feature type="transmembrane region" description="Helical" evidence="1">
    <location>
        <begin position="79"/>
        <end position="99"/>
    </location>
</feature>
<feature type="topological domain" description="Cytoplasmic" evidence="1">
    <location>
        <begin position="100"/>
        <end position="119"/>
    </location>
</feature>
<feature type="transmembrane region" description="Helical" evidence="1">
    <location>
        <begin position="120"/>
        <end position="140"/>
    </location>
</feature>
<feature type="topological domain" description="Extracellular" evidence="1">
    <location>
        <begin position="141"/>
        <end position="147"/>
    </location>
</feature>
<feature type="transmembrane region" description="Helical" evidence="1">
    <location>
        <begin position="148"/>
        <end position="168"/>
    </location>
</feature>
<feature type="topological domain" description="Cytoplasmic" evidence="1">
    <location>
        <begin position="169"/>
        <end position="176"/>
    </location>
</feature>
<feature type="transmembrane region" description="Helical" evidence="1">
    <location>
        <begin position="177"/>
        <end position="197"/>
    </location>
</feature>
<feature type="topological domain" description="Extracellular" evidence="1">
    <location>
        <begin position="198"/>
        <end position="208"/>
    </location>
</feature>
<feature type="transmembrane region" description="Helical" evidence="1">
    <location>
        <begin position="209"/>
        <end position="229"/>
    </location>
</feature>
<feature type="topological domain" description="Cytoplasmic" evidence="1">
    <location>
        <begin position="230"/>
        <end position="241"/>
    </location>
</feature>
<feature type="transmembrane region" description="Helical" evidence="1">
    <location>
        <begin position="242"/>
        <end position="262"/>
    </location>
</feature>
<feature type="topological domain" description="Extracellular" evidence="1">
    <location>
        <begin position="263"/>
        <end position="326"/>
    </location>
</feature>
<feature type="transmembrane region" description="Helical" evidence="1">
    <location>
        <begin position="327"/>
        <end position="347"/>
    </location>
</feature>
<feature type="topological domain" description="Cytoplasmic" evidence="1">
    <location>
        <begin position="348"/>
        <end position="359"/>
    </location>
</feature>
<feature type="transmembrane region" description="Helical" evidence="1">
    <location>
        <begin position="360"/>
        <end position="380"/>
    </location>
</feature>
<feature type="topological domain" description="Extracellular" evidence="1">
    <location>
        <begin position="381"/>
        <end position="387"/>
    </location>
</feature>
<feature type="transmembrane region" description="Helical" evidence="1">
    <location>
        <begin position="388"/>
        <end position="408"/>
    </location>
</feature>
<feature type="topological domain" description="Cytoplasmic" evidence="1">
    <location>
        <begin position="409"/>
        <end position="416"/>
    </location>
</feature>
<feature type="transmembrane region" description="Helical" evidence="1">
    <location>
        <begin position="417"/>
        <end position="437"/>
    </location>
</feature>
<feature type="topological domain" description="Extracellular" evidence="1">
    <location>
        <begin position="438"/>
        <end position="482"/>
    </location>
</feature>
<feature type="transmembrane region" description="Helical" evidence="1">
    <location>
        <begin position="483"/>
        <end position="503"/>
    </location>
</feature>
<feature type="topological domain" description="Cytoplasmic" evidence="1">
    <location>
        <begin position="504"/>
        <end position="542"/>
    </location>
</feature>
<accession>P40445</accession>
<accession>D6VVC1</accession>
<dbReference type="EMBL" id="Z46921">
    <property type="protein sequence ID" value="CAA87026.1"/>
    <property type="molecule type" value="Genomic_DNA"/>
</dbReference>
<dbReference type="EMBL" id="AY723832">
    <property type="protein sequence ID" value="AAU09749.1"/>
    <property type="molecule type" value="Genomic_DNA"/>
</dbReference>
<dbReference type="EMBL" id="BK006942">
    <property type="protein sequence ID" value="DAA08387.1"/>
    <property type="molecule type" value="Genomic_DNA"/>
</dbReference>
<dbReference type="PIR" id="S50361">
    <property type="entry name" value="S50361"/>
</dbReference>
<dbReference type="SMR" id="P40445"/>
<dbReference type="BioGRID" id="34827">
    <property type="interactions" value="35"/>
</dbReference>
<dbReference type="DIP" id="DIP-8099N"/>
<dbReference type="FunCoup" id="P40445">
    <property type="interactions" value="79"/>
</dbReference>
<dbReference type="STRING" id="4932.YIL166C"/>
<dbReference type="TCDB" id="2.A.1.14.38">
    <property type="family name" value="the major facilitator superfamily (mfs)"/>
</dbReference>
<dbReference type="PaxDb" id="4932-YIL166C"/>
<dbReference type="EnsemblFungi" id="YIL166C_mRNA">
    <property type="protein sequence ID" value="YIL166C"/>
    <property type="gene ID" value="YIL166C"/>
</dbReference>
<dbReference type="KEGG" id="sce:YIL166C"/>
<dbReference type="AGR" id="SGD:S000001428"/>
<dbReference type="SGD" id="S000001428">
    <property type="gene designation" value="YIL166C"/>
</dbReference>
<dbReference type="VEuPathDB" id="FungiDB:YIL166C"/>
<dbReference type="eggNOG" id="KOG2533">
    <property type="taxonomic scope" value="Eukaryota"/>
</dbReference>
<dbReference type="HOGENOM" id="CLU_001265_2_0_1"/>
<dbReference type="InParanoid" id="P40445"/>
<dbReference type="OMA" id="AWIPFQP"/>
<dbReference type="OrthoDB" id="1935484at2759"/>
<dbReference type="BioCyc" id="YEAST:G3O-31411-MONOMER"/>
<dbReference type="BioGRID-ORCS" id="854640">
    <property type="hits" value="1 hit in 10 CRISPR screens"/>
</dbReference>
<dbReference type="PRO" id="PR:P40445"/>
<dbReference type="Proteomes" id="UP000002311">
    <property type="component" value="Chromosome IX"/>
</dbReference>
<dbReference type="RNAct" id="P40445">
    <property type="molecule type" value="protein"/>
</dbReference>
<dbReference type="GO" id="GO:0071944">
    <property type="term" value="C:cell periphery"/>
    <property type="evidence" value="ECO:0007005"/>
    <property type="project" value="SGD"/>
</dbReference>
<dbReference type="GO" id="GO:0000324">
    <property type="term" value="C:fungal-type vacuole"/>
    <property type="evidence" value="ECO:0007005"/>
    <property type="project" value="SGD"/>
</dbReference>
<dbReference type="GO" id="GO:0016020">
    <property type="term" value="C:membrane"/>
    <property type="evidence" value="ECO:0000318"/>
    <property type="project" value="GO_Central"/>
</dbReference>
<dbReference type="GO" id="GO:0005342">
    <property type="term" value="F:organic acid transmembrane transporter activity"/>
    <property type="evidence" value="ECO:0000315"/>
    <property type="project" value="SGD"/>
</dbReference>
<dbReference type="GO" id="GO:0008514">
    <property type="term" value="F:organic anion transmembrane transporter activity"/>
    <property type="evidence" value="ECO:0000315"/>
    <property type="project" value="SGD"/>
</dbReference>
<dbReference type="GO" id="GO:0015116">
    <property type="term" value="F:sulfate transmembrane transporter activity"/>
    <property type="evidence" value="ECO:0000315"/>
    <property type="project" value="SGD"/>
</dbReference>
<dbReference type="GO" id="GO:1901682">
    <property type="term" value="F:sulfur compound transmembrane transporter activity"/>
    <property type="evidence" value="ECO:0000315"/>
    <property type="project" value="SGD"/>
</dbReference>
<dbReference type="GO" id="GO:0022857">
    <property type="term" value="F:transmembrane transporter activity"/>
    <property type="evidence" value="ECO:0000318"/>
    <property type="project" value="GO_Central"/>
</dbReference>
<dbReference type="GO" id="GO:0015849">
    <property type="term" value="P:organic acid transport"/>
    <property type="evidence" value="ECO:0000315"/>
    <property type="project" value="SGD"/>
</dbReference>
<dbReference type="GO" id="GO:0015711">
    <property type="term" value="P:organic anion transport"/>
    <property type="evidence" value="ECO:0000315"/>
    <property type="project" value="SGD"/>
</dbReference>
<dbReference type="GO" id="GO:1902358">
    <property type="term" value="P:sulfate transmembrane transport"/>
    <property type="evidence" value="ECO:0000316"/>
    <property type="project" value="SGD"/>
</dbReference>
<dbReference type="GO" id="GO:0000316">
    <property type="term" value="P:sulfite transmembrane transport"/>
    <property type="evidence" value="ECO:0000316"/>
    <property type="project" value="SGD"/>
</dbReference>
<dbReference type="GO" id="GO:0072348">
    <property type="term" value="P:sulfur compound transport"/>
    <property type="evidence" value="ECO:0000315"/>
    <property type="project" value="SGD"/>
</dbReference>
<dbReference type="CDD" id="cd17327">
    <property type="entry name" value="MFS_FEN2_like"/>
    <property type="match status" value="1"/>
</dbReference>
<dbReference type="FunFam" id="1.20.1250.20:FF:000106">
    <property type="entry name" value="MFS transporter, putative"/>
    <property type="match status" value="1"/>
</dbReference>
<dbReference type="Gene3D" id="1.20.1250.20">
    <property type="entry name" value="MFS general substrate transporter like domains"/>
    <property type="match status" value="1"/>
</dbReference>
<dbReference type="InterPro" id="IPR011701">
    <property type="entry name" value="MFS"/>
</dbReference>
<dbReference type="InterPro" id="IPR020846">
    <property type="entry name" value="MFS_dom"/>
</dbReference>
<dbReference type="InterPro" id="IPR036259">
    <property type="entry name" value="MFS_trans_sf"/>
</dbReference>
<dbReference type="PANTHER" id="PTHR43791:SF65">
    <property type="entry name" value="MAJOR FACILITATOR SUPERFAMILY (MFS) PROFILE DOMAIN-CONTAINING PROTEIN-RELATED"/>
    <property type="match status" value="1"/>
</dbReference>
<dbReference type="PANTHER" id="PTHR43791">
    <property type="entry name" value="PERMEASE-RELATED"/>
    <property type="match status" value="1"/>
</dbReference>
<dbReference type="Pfam" id="PF07690">
    <property type="entry name" value="MFS_1"/>
    <property type="match status" value="1"/>
</dbReference>
<dbReference type="SUPFAM" id="SSF103473">
    <property type="entry name" value="MFS general substrate transporter"/>
    <property type="match status" value="1"/>
</dbReference>
<dbReference type="PROSITE" id="PS50850">
    <property type="entry name" value="MFS"/>
    <property type="match status" value="1"/>
</dbReference>
<sequence length="542" mass="61898">MSVQKEEYDIVEKAQLSVSAESLTSDSESISHNPFDDFHKAERWRKVYESSGYEGLSKFDPEFTWTKDEEKKLVRKMDLKIFLWVFIMFAFLDLIRKNIARAVSDNFIVDLKMNTNDYNLGQTVYLVIFLASELPGNLLSKRFGPERVIPVQIVLWSVICITQAGLKNRGQFIATRCLLGMVQGGFIPDNILYLSYYYTGAELTFRLSFFWCAIPLFQILGSLLASGIIEMRGIHNLAGWQYLFIIEGFLSLSVGVASFYLMRRGPTQTGESAFHKGKSLFTEYEEKIMVNRILRDDPSKGDMSNRQPVTFKEILYTLTEFDLWPLFIQGITAFISLQTVGSYLSLILKSLNYSTFLSNILAIPGQALLLINLPLAALLSRKLKEKSLCVGIANVWVLPFIVSLVALPTDTNPWIKYILLTGILGLPYTHSILAGWVSEISNSVRSRTVGTALYNMSAQVGAIIASNMYRNDDKPYYTRGNKILLGFTCFNICMAVATKFYYISRNKYKDRKWNSMTKEEQINYLDTTKDKGMKRLDYRFIH</sequence>
<evidence type="ECO:0000255" key="1"/>
<evidence type="ECO:0000305" key="2"/>
<organism>
    <name type="scientific">Saccharomyces cerevisiae (strain ATCC 204508 / S288c)</name>
    <name type="common">Baker's yeast</name>
    <dbReference type="NCBI Taxonomy" id="559292"/>
    <lineage>
        <taxon>Eukaryota</taxon>
        <taxon>Fungi</taxon>
        <taxon>Dikarya</taxon>
        <taxon>Ascomycota</taxon>
        <taxon>Saccharomycotina</taxon>
        <taxon>Saccharomycetes</taxon>
        <taxon>Saccharomycetales</taxon>
        <taxon>Saccharomycetaceae</taxon>
        <taxon>Saccharomyces</taxon>
    </lineage>
</organism>
<name>YIQ6_YEAST</name>
<reference key="1">
    <citation type="journal article" date="1997" name="Nature">
        <title>The nucleotide sequence of Saccharomyces cerevisiae chromosome IX.</title>
        <authorList>
            <person name="Churcher C.M."/>
            <person name="Bowman S."/>
            <person name="Badcock K."/>
            <person name="Bankier A.T."/>
            <person name="Brown D."/>
            <person name="Chillingworth T."/>
            <person name="Connor R."/>
            <person name="Devlin K."/>
            <person name="Gentles S."/>
            <person name="Hamlin N."/>
            <person name="Harris D.E."/>
            <person name="Horsnell T."/>
            <person name="Hunt S."/>
            <person name="Jagels K."/>
            <person name="Jones M."/>
            <person name="Lye G."/>
            <person name="Moule S."/>
            <person name="Odell C."/>
            <person name="Pearson D."/>
            <person name="Rajandream M.A."/>
            <person name="Rice P."/>
            <person name="Rowley N."/>
            <person name="Skelton J."/>
            <person name="Smith V."/>
            <person name="Walsh S.V."/>
            <person name="Whitehead S."/>
            <person name="Barrell B.G."/>
        </authorList>
    </citation>
    <scope>NUCLEOTIDE SEQUENCE [LARGE SCALE GENOMIC DNA]</scope>
    <source>
        <strain>ATCC 204508 / S288c</strain>
    </source>
</reference>
<reference key="2">
    <citation type="journal article" date="2014" name="G3 (Bethesda)">
        <title>The reference genome sequence of Saccharomyces cerevisiae: Then and now.</title>
        <authorList>
            <person name="Engel S.R."/>
            <person name="Dietrich F.S."/>
            <person name="Fisk D.G."/>
            <person name="Binkley G."/>
            <person name="Balakrishnan R."/>
            <person name="Costanzo M.C."/>
            <person name="Dwight S.S."/>
            <person name="Hitz B.C."/>
            <person name="Karra K."/>
            <person name="Nash R.S."/>
            <person name="Weng S."/>
            <person name="Wong E.D."/>
            <person name="Lloyd P."/>
            <person name="Skrzypek M.S."/>
            <person name="Miyasato S.R."/>
            <person name="Simison M."/>
            <person name="Cherry J.M."/>
        </authorList>
    </citation>
    <scope>GENOME REANNOTATION</scope>
    <source>
        <strain>ATCC 204508 / S288c</strain>
    </source>
</reference>
<reference key="3">
    <citation type="journal article" date="2007" name="Genome Res.">
        <title>Approaching a complete repository of sequence-verified protein-encoding clones for Saccharomyces cerevisiae.</title>
        <authorList>
            <person name="Hu Y."/>
            <person name="Rolfs A."/>
            <person name="Bhullar B."/>
            <person name="Murthy T.V.S."/>
            <person name="Zhu C."/>
            <person name="Berger M.F."/>
            <person name="Camargo A.A."/>
            <person name="Kelley F."/>
            <person name="McCarron S."/>
            <person name="Jepson D."/>
            <person name="Richardson A."/>
            <person name="Raphael J."/>
            <person name="Moreira D."/>
            <person name="Taycher E."/>
            <person name="Zuo D."/>
            <person name="Mohr S."/>
            <person name="Kane M.F."/>
            <person name="Williamson J."/>
            <person name="Simpson A.J.G."/>
            <person name="Bulyk M.L."/>
            <person name="Harlow E."/>
            <person name="Marsischky G."/>
            <person name="Kolodner R.D."/>
            <person name="LaBaer J."/>
        </authorList>
    </citation>
    <scope>NUCLEOTIDE SEQUENCE [GENOMIC DNA]</scope>
    <source>
        <strain>ATCC 204508 / S288c</strain>
    </source>
</reference>
<reference key="4">
    <citation type="journal article" date="2006" name="Proc. Natl. Acad. Sci. U.S.A.">
        <title>A global topology map of the Saccharomyces cerevisiae membrane proteome.</title>
        <authorList>
            <person name="Kim H."/>
            <person name="Melen K."/>
            <person name="Oesterberg M."/>
            <person name="von Heijne G."/>
        </authorList>
    </citation>
    <scope>TOPOLOGY [LARGE SCALE ANALYSIS]</scope>
    <source>
        <strain>ATCC 208353 / W303-1A</strain>
    </source>
</reference>